<evidence type="ECO:0000255" key="1">
    <source>
        <dbReference type="HAMAP-Rule" id="MF_01820"/>
    </source>
</evidence>
<evidence type="ECO:0000255" key="2">
    <source>
        <dbReference type="PROSITE-ProRule" id="PRU01058"/>
    </source>
</evidence>
<organism>
    <name type="scientific">Listeria monocytogenes serovar 1/2a (strain ATCC BAA-679 / EGD-e)</name>
    <dbReference type="NCBI Taxonomy" id="169963"/>
    <lineage>
        <taxon>Bacteria</taxon>
        <taxon>Bacillati</taxon>
        <taxon>Bacillota</taxon>
        <taxon>Bacilli</taxon>
        <taxon>Bacillales</taxon>
        <taxon>Listeriaceae</taxon>
        <taxon>Listeria</taxon>
    </lineage>
</organism>
<protein>
    <recommendedName>
        <fullName evidence="1">Small ribosomal subunit biogenesis GTPase RsgA 2</fullName>
        <ecNumber evidence="1">3.6.1.-</ecNumber>
    </recommendedName>
</protein>
<comment type="function">
    <text evidence="1">One of several proteins that assist in the late maturation steps of the functional core of the 30S ribosomal subunit. Helps release RbfA from mature subunits. May play a role in the assembly of ribosomal proteins into the subunit. Circularly permuted GTPase that catalyzes slow GTP hydrolysis, GTPase activity is stimulated by the 30S ribosomal subunit.</text>
</comment>
<comment type="cofactor">
    <cofactor evidence="1">
        <name>Zn(2+)</name>
        <dbReference type="ChEBI" id="CHEBI:29105"/>
    </cofactor>
    <text evidence="1">Binds 1 zinc ion per subunit.</text>
</comment>
<comment type="subunit">
    <text evidence="1">Monomer. Associates with 30S ribosomal subunit, binds 16S rRNA.</text>
</comment>
<comment type="subcellular location">
    <subcellularLocation>
        <location evidence="1">Cytoplasm</location>
    </subcellularLocation>
</comment>
<comment type="similarity">
    <text evidence="1">Belongs to the TRAFAC class YlqF/YawG GTPase family. RsgA subfamily.</text>
</comment>
<feature type="chain" id="PRO_0000171491" description="Small ribosomal subunit biogenesis GTPase RsgA 2">
    <location>
        <begin position="1"/>
        <end position="291"/>
    </location>
</feature>
<feature type="domain" description="CP-type G" evidence="2">
    <location>
        <begin position="63"/>
        <end position="221"/>
    </location>
</feature>
<feature type="binding site" evidence="1">
    <location>
        <begin position="112"/>
        <end position="115"/>
    </location>
    <ligand>
        <name>GTP</name>
        <dbReference type="ChEBI" id="CHEBI:37565"/>
    </ligand>
</feature>
<feature type="binding site" evidence="1">
    <location>
        <begin position="164"/>
        <end position="172"/>
    </location>
    <ligand>
        <name>GTP</name>
        <dbReference type="ChEBI" id="CHEBI:37565"/>
    </ligand>
</feature>
<feature type="binding site" evidence="1">
    <location>
        <position position="245"/>
    </location>
    <ligand>
        <name>Zn(2+)</name>
        <dbReference type="ChEBI" id="CHEBI:29105"/>
    </ligand>
</feature>
<feature type="binding site" evidence="1">
    <location>
        <position position="250"/>
    </location>
    <ligand>
        <name>Zn(2+)</name>
        <dbReference type="ChEBI" id="CHEBI:29105"/>
    </ligand>
</feature>
<feature type="binding site" evidence="1">
    <location>
        <position position="252"/>
    </location>
    <ligand>
        <name>Zn(2+)</name>
        <dbReference type="ChEBI" id="CHEBI:29105"/>
    </ligand>
</feature>
<feature type="binding site" evidence="1">
    <location>
        <position position="258"/>
    </location>
    <ligand>
        <name>Zn(2+)</name>
        <dbReference type="ChEBI" id="CHEBI:29105"/>
    </ligand>
</feature>
<name>RSGA2_LISMO</name>
<dbReference type="EC" id="3.6.1.-" evidence="1"/>
<dbReference type="EMBL" id="AL591981">
    <property type="protein sequence ID" value="CAC99897.1"/>
    <property type="molecule type" value="Genomic_DNA"/>
</dbReference>
<dbReference type="PIR" id="AC1302">
    <property type="entry name" value="AC1302"/>
</dbReference>
<dbReference type="RefSeq" id="NP_465344.1">
    <property type="nucleotide sequence ID" value="NC_003210.1"/>
</dbReference>
<dbReference type="SMR" id="Q8Y680"/>
<dbReference type="STRING" id="169963.gene:17594504"/>
<dbReference type="PaxDb" id="169963-lmo1819"/>
<dbReference type="EnsemblBacteria" id="CAC99897">
    <property type="protein sequence ID" value="CAC99897"/>
    <property type="gene ID" value="CAC99897"/>
</dbReference>
<dbReference type="GeneID" id="985912"/>
<dbReference type="KEGG" id="lmo:lmo1819"/>
<dbReference type="PATRIC" id="fig|169963.11.peg.1864"/>
<dbReference type="eggNOG" id="COG1162">
    <property type="taxonomic scope" value="Bacteria"/>
</dbReference>
<dbReference type="HOGENOM" id="CLU_033617_2_1_9"/>
<dbReference type="OrthoDB" id="9809485at2"/>
<dbReference type="PhylomeDB" id="Q8Y680"/>
<dbReference type="BioCyc" id="LMON169963:LMO1819-MONOMER"/>
<dbReference type="Proteomes" id="UP000000817">
    <property type="component" value="Chromosome"/>
</dbReference>
<dbReference type="GO" id="GO:0005737">
    <property type="term" value="C:cytoplasm"/>
    <property type="evidence" value="ECO:0007669"/>
    <property type="project" value="UniProtKB-SubCell"/>
</dbReference>
<dbReference type="GO" id="GO:0005525">
    <property type="term" value="F:GTP binding"/>
    <property type="evidence" value="ECO:0007669"/>
    <property type="project" value="UniProtKB-UniRule"/>
</dbReference>
<dbReference type="GO" id="GO:0003924">
    <property type="term" value="F:GTPase activity"/>
    <property type="evidence" value="ECO:0007669"/>
    <property type="project" value="UniProtKB-UniRule"/>
</dbReference>
<dbReference type="GO" id="GO:0046872">
    <property type="term" value="F:metal ion binding"/>
    <property type="evidence" value="ECO:0007669"/>
    <property type="project" value="UniProtKB-KW"/>
</dbReference>
<dbReference type="GO" id="GO:0019843">
    <property type="term" value="F:rRNA binding"/>
    <property type="evidence" value="ECO:0007669"/>
    <property type="project" value="UniProtKB-KW"/>
</dbReference>
<dbReference type="GO" id="GO:0042274">
    <property type="term" value="P:ribosomal small subunit biogenesis"/>
    <property type="evidence" value="ECO:0007669"/>
    <property type="project" value="UniProtKB-UniRule"/>
</dbReference>
<dbReference type="CDD" id="cd04466">
    <property type="entry name" value="S1_YloQ_GTPase"/>
    <property type="match status" value="1"/>
</dbReference>
<dbReference type="CDD" id="cd01854">
    <property type="entry name" value="YjeQ_EngC"/>
    <property type="match status" value="1"/>
</dbReference>
<dbReference type="Gene3D" id="2.40.50.140">
    <property type="entry name" value="Nucleic acid-binding proteins"/>
    <property type="match status" value="1"/>
</dbReference>
<dbReference type="Gene3D" id="3.40.50.300">
    <property type="entry name" value="P-loop containing nucleotide triphosphate hydrolases"/>
    <property type="match status" value="1"/>
</dbReference>
<dbReference type="Gene3D" id="1.10.40.50">
    <property type="entry name" value="Probable gtpase engc, domain 3"/>
    <property type="match status" value="1"/>
</dbReference>
<dbReference type="HAMAP" id="MF_01820">
    <property type="entry name" value="GTPase_RsgA"/>
    <property type="match status" value="1"/>
</dbReference>
<dbReference type="InterPro" id="IPR030378">
    <property type="entry name" value="G_CP_dom"/>
</dbReference>
<dbReference type="InterPro" id="IPR012340">
    <property type="entry name" value="NA-bd_OB-fold"/>
</dbReference>
<dbReference type="InterPro" id="IPR027417">
    <property type="entry name" value="P-loop_NTPase"/>
</dbReference>
<dbReference type="InterPro" id="IPR004881">
    <property type="entry name" value="Ribosome_biogen_GTPase_RsgA"/>
</dbReference>
<dbReference type="InterPro" id="IPR010914">
    <property type="entry name" value="RsgA_GTPase_dom"/>
</dbReference>
<dbReference type="InterPro" id="IPR031944">
    <property type="entry name" value="RsgA_N"/>
</dbReference>
<dbReference type="NCBIfam" id="TIGR00157">
    <property type="entry name" value="ribosome small subunit-dependent GTPase A"/>
    <property type="match status" value="1"/>
</dbReference>
<dbReference type="PANTHER" id="PTHR32120">
    <property type="entry name" value="SMALL RIBOSOMAL SUBUNIT BIOGENESIS GTPASE RSGA"/>
    <property type="match status" value="1"/>
</dbReference>
<dbReference type="PANTHER" id="PTHR32120:SF11">
    <property type="entry name" value="SMALL RIBOSOMAL SUBUNIT BIOGENESIS GTPASE RSGA 1, MITOCHONDRIAL-RELATED"/>
    <property type="match status" value="1"/>
</dbReference>
<dbReference type="Pfam" id="PF03193">
    <property type="entry name" value="RsgA_GTPase"/>
    <property type="match status" value="1"/>
</dbReference>
<dbReference type="Pfam" id="PF16745">
    <property type="entry name" value="RsgA_N"/>
    <property type="match status" value="1"/>
</dbReference>
<dbReference type="SUPFAM" id="SSF50249">
    <property type="entry name" value="Nucleic acid-binding proteins"/>
    <property type="match status" value="1"/>
</dbReference>
<dbReference type="SUPFAM" id="SSF52540">
    <property type="entry name" value="P-loop containing nucleoside triphosphate hydrolases"/>
    <property type="match status" value="1"/>
</dbReference>
<dbReference type="PROSITE" id="PS50936">
    <property type="entry name" value="ENGC_GTPASE"/>
    <property type="match status" value="1"/>
</dbReference>
<dbReference type="PROSITE" id="PS51721">
    <property type="entry name" value="G_CP"/>
    <property type="match status" value="1"/>
</dbReference>
<sequence length="291" mass="32744">MLEGQIIKALSGFYYVFSEGKVYQCRARGNFRKRNISPLVGDDVEFQIENKTDGYILDVMSRENALVRPPVANIDIAILVFSAVEPDFSTNLADRFLVAIEKEDIKPVICISKMDLASESEKEQIAVYKDIYEAIGYDVFVTNDEPDKEAIKDYISGKTAVIAGQSGVGKSTLLNSLNSDLTLKTAEISNSLGRGKHTTRHVELMPIGDGFVADTPGFSSIEWDDLQPETLQFCFPEIEDRRSGCKYRGCMHENEPSCAVKTAVEANEIAEFRYKHYIQILQELKNRKPRY</sequence>
<keyword id="KW-0963">Cytoplasm</keyword>
<keyword id="KW-0342">GTP-binding</keyword>
<keyword id="KW-0378">Hydrolase</keyword>
<keyword id="KW-0479">Metal-binding</keyword>
<keyword id="KW-0547">Nucleotide-binding</keyword>
<keyword id="KW-1185">Reference proteome</keyword>
<keyword id="KW-0690">Ribosome biogenesis</keyword>
<keyword id="KW-0694">RNA-binding</keyword>
<keyword id="KW-0699">rRNA-binding</keyword>
<keyword id="KW-0862">Zinc</keyword>
<gene>
    <name evidence="1" type="primary">rsgA2</name>
    <name type="ordered locus">lmo1819</name>
</gene>
<reference key="1">
    <citation type="journal article" date="2001" name="Science">
        <title>Comparative genomics of Listeria species.</title>
        <authorList>
            <person name="Glaser P."/>
            <person name="Frangeul L."/>
            <person name="Buchrieser C."/>
            <person name="Rusniok C."/>
            <person name="Amend A."/>
            <person name="Baquero F."/>
            <person name="Berche P."/>
            <person name="Bloecker H."/>
            <person name="Brandt P."/>
            <person name="Chakraborty T."/>
            <person name="Charbit A."/>
            <person name="Chetouani F."/>
            <person name="Couve E."/>
            <person name="de Daruvar A."/>
            <person name="Dehoux P."/>
            <person name="Domann E."/>
            <person name="Dominguez-Bernal G."/>
            <person name="Duchaud E."/>
            <person name="Durant L."/>
            <person name="Dussurget O."/>
            <person name="Entian K.-D."/>
            <person name="Fsihi H."/>
            <person name="Garcia-del Portillo F."/>
            <person name="Garrido P."/>
            <person name="Gautier L."/>
            <person name="Goebel W."/>
            <person name="Gomez-Lopez N."/>
            <person name="Hain T."/>
            <person name="Hauf J."/>
            <person name="Jackson D."/>
            <person name="Jones L.-M."/>
            <person name="Kaerst U."/>
            <person name="Kreft J."/>
            <person name="Kuhn M."/>
            <person name="Kunst F."/>
            <person name="Kurapkat G."/>
            <person name="Madueno E."/>
            <person name="Maitournam A."/>
            <person name="Mata Vicente J."/>
            <person name="Ng E."/>
            <person name="Nedjari H."/>
            <person name="Nordsiek G."/>
            <person name="Novella S."/>
            <person name="de Pablos B."/>
            <person name="Perez-Diaz J.-C."/>
            <person name="Purcell R."/>
            <person name="Remmel B."/>
            <person name="Rose M."/>
            <person name="Schlueter T."/>
            <person name="Simoes N."/>
            <person name="Tierrez A."/>
            <person name="Vazquez-Boland J.-A."/>
            <person name="Voss H."/>
            <person name="Wehland J."/>
            <person name="Cossart P."/>
        </authorList>
    </citation>
    <scope>NUCLEOTIDE SEQUENCE [LARGE SCALE GENOMIC DNA]</scope>
    <source>
        <strain>ATCC BAA-679 / EGD-e</strain>
    </source>
</reference>
<accession>Q8Y680</accession>
<proteinExistence type="inferred from homology"/>